<keyword id="KW-0012">Acyltransferase</keyword>
<keyword id="KW-0511">Multifunctional enzyme</keyword>
<keyword id="KW-0596">Phosphopantetheine</keyword>
<keyword id="KW-0597">Phosphoprotein</keyword>
<keyword id="KW-0808">Transferase</keyword>
<sequence>MDNSMMDSTLRRILFFSNEFPSDDLKDLFRRLDQHSKDRRFRLLSIFLEESTAILKDEVSKLPRPLKELVPPFNSVLSLVDVDFRQGPLGAAMESSMLTILELGLFIGHYESEDTEWDLVPGQSVLAGLSIGILAAAAVALSSSLADVAKTGAEAVRVSFRLGVYVADISTKLEAPQSDGTLSSWAHVVTEMTEASVQDELKQFNTGTHSPELTKVFVSAADKTSVSVSGPPSRIKAAFQHSPVLRYSKSLPLPVYDGLCHASHLYTRSDIDSIINSSESVILPDRSVRLALLSSQTGKPFVAKTASDLFLEIGTELLTGTIYLDNVTAGIVQHLQPQSKETSSCQIDSFRTSLVLRGIHSAVEAELSRDRQLTRRDLVSWISRDFGPRRPRSQASSKLAIVGMACRLPGGANDLDLFWKLLEEGRDTLTTVPPDRFDLNTHYDPTGKTENATQTPYGNFIDRPGFFDAGFFNMSPREAEQTDPMQRLALVTAYEALEMAGVVPGRTPSTHPSRIGTFYGQASDDWRELNASQNISTYAVPGGERSFGNGRINYFFKFSGPSFNLDTACSSGLAAVQAACSALWAGEVDTAIAGGLNVITDPDNYCGLGNAHFLSKTGQCKVWDKDADGYCRADGIGSVVIKRLEDAEADNDNILAVVLGASTNHSAEAISITHPHAGAQKANYRQVLNQAGVNPIDVSYIELHGTGTQAGDAVESESVSDIFAPVTPRRRPDQRLYLGAVKSNIGHGEAAAGIASLLKALLVYQKNLIPMHIGIKSEINPTIPKDLERRNVGLAMQNTPWPRPAGKKRLAVVNSFGAHGGNTTLLLEDAPERVKIQGTEDRITHSILLSAKSKTSLQANMESLLSYLDQHPETSLADLAYTTSSRRMHHNMRFGTLVSSISGLQKMLRSQLDNPNFASEIRPVPNEAPSVILAFTGQGAYYHGMGSELFAEFPYFRAQVQQLDRLAQRLGFPSVVPPWRRFWSLLGVSISAVIGHSLGEYAALAVAGVISAADAIYLVGRRAQLVEERCAQASHSMLSVRASEDAIQEMLAVELETASITYEVSCCNTNQDTVIGGPKGEINDIRRALEAKSIKCTILDVPYAFHTAQMNPILDDLETLAKAVPFKAPSIPVISPLLATVIYDVKSLDANYLRRATRETVDFAAAIEAAQDMGLVDSKTIWIDVGPHPICAGLVRSMIPSASAIPSCRRNEDSIATISKGLVTLYLAGLTPSWVEFFKPREREYSLLYLPKYRWNETDYWIPYIGTWTLDKAHLKHGTKPKTPFSGSMSRPSALRTSLVHQITAETVEATTATLHTISDMQHPDFLEAIHGHTMNKCGVATSSIWSDMAFTVGEYLYRRLVPNTKDVHMNLTDVEVLHAQVASKTKGSVQPLVLRAHLDLSTNSMSLAWFNADGETGECAAESFATATIRFEDPEAWRKDWARLAHLVRGRIEVLEQRATEGKASRLSKPLAYALFKNVVDYADRYRGMDSVVLDELEAMAEVTLVPERYGTWHTPPHWIDSVSHLAGLVMNGSDASNTRDYFFVTPGCDSFRLLKKLEPGARYRSYVRMFPLPEDPNMHSGDVYILQGEEIVGMVGMIRFRRVPRLLMDRFFSPPTTTSVAVPVPPLTGATMKCKDITQTAPALPTPAPPIVVSSPVVSSTMACNIPEPAPLLATSSKSSTPKESPIVTPAESERAEPVDNSMTSQCLRLMARETGLEVEALTADASFVQLGVDSLMSLVLSEKFRAELGVEIKSSLFLECPTIGEMTAWIEEYC</sequence>
<reference key="1">
    <citation type="journal article" date="2012" name="MBio">
        <title>Comparative genome analysis of Trichophyton rubrum and related dermatophytes reveals candidate genes involved in infection.</title>
        <authorList>
            <person name="Martinez D.A."/>
            <person name="Oliver B.G."/>
            <person name="Graeser Y."/>
            <person name="Goldberg J.M."/>
            <person name="Li W."/>
            <person name="Martinez-Rossi N.M."/>
            <person name="Monod M."/>
            <person name="Shelest E."/>
            <person name="Barton R.C."/>
            <person name="Birch E."/>
            <person name="Brakhage A.A."/>
            <person name="Chen Z."/>
            <person name="Gurr S.J."/>
            <person name="Heiman D."/>
            <person name="Heitman J."/>
            <person name="Kosti I."/>
            <person name="Rossi A."/>
            <person name="Saif S."/>
            <person name="Samalova M."/>
            <person name="Saunders C.W."/>
            <person name="Shea T."/>
            <person name="Summerbell R.C."/>
            <person name="Xu J."/>
            <person name="Young S."/>
            <person name="Zeng Q."/>
            <person name="Birren B.W."/>
            <person name="Cuomo C.A."/>
            <person name="White T.C."/>
        </authorList>
    </citation>
    <scope>NUCLEOTIDE SEQUENCE [LARGE SCALE GENOMIC DNA]</scope>
    <source>
        <strain>ATCC MYA-4606 / CBS 127.97</strain>
    </source>
</reference>
<reference key="2">
    <citation type="journal article" date="2013" name="ACS Synth. Biol.">
        <title>Discovery of cryptic polyketide metabolites from dermatophytes using heterologous expression in Aspergillus nidulans.</title>
        <authorList>
            <person name="Yin W.B."/>
            <person name="Chooi Y.H."/>
            <person name="Smith A.R."/>
            <person name="Cacho R.A."/>
            <person name="Hu Y."/>
            <person name="White T.C."/>
            <person name="Tang Y."/>
        </authorList>
    </citation>
    <scope>FUNCTION</scope>
</reference>
<dbReference type="EC" id="2.3.1.-" evidence="11"/>
<dbReference type="EMBL" id="DS995747">
    <property type="protein sequence ID" value="EGE06343.1"/>
    <property type="molecule type" value="Genomic_DNA"/>
</dbReference>
<dbReference type="SMR" id="F2PWS5"/>
<dbReference type="VEuPathDB" id="FungiDB:TEQG_05346"/>
<dbReference type="eggNOG" id="KOG1202">
    <property type="taxonomic scope" value="Eukaryota"/>
</dbReference>
<dbReference type="HOGENOM" id="CLU_000022_6_4_1"/>
<dbReference type="OrthoDB" id="2891at34384"/>
<dbReference type="Proteomes" id="UP000009169">
    <property type="component" value="Unassembled WGS sequence"/>
</dbReference>
<dbReference type="GO" id="GO:0004315">
    <property type="term" value="F:3-oxoacyl-[acyl-carrier-protein] synthase activity"/>
    <property type="evidence" value="ECO:0007669"/>
    <property type="project" value="InterPro"/>
</dbReference>
<dbReference type="GO" id="GO:0004312">
    <property type="term" value="F:fatty acid synthase activity"/>
    <property type="evidence" value="ECO:0007669"/>
    <property type="project" value="TreeGrafter"/>
</dbReference>
<dbReference type="GO" id="GO:0031177">
    <property type="term" value="F:phosphopantetheine binding"/>
    <property type="evidence" value="ECO:0007669"/>
    <property type="project" value="InterPro"/>
</dbReference>
<dbReference type="GO" id="GO:0006633">
    <property type="term" value="P:fatty acid biosynthetic process"/>
    <property type="evidence" value="ECO:0007669"/>
    <property type="project" value="InterPro"/>
</dbReference>
<dbReference type="GO" id="GO:0044550">
    <property type="term" value="P:secondary metabolite biosynthetic process"/>
    <property type="evidence" value="ECO:0007669"/>
    <property type="project" value="TreeGrafter"/>
</dbReference>
<dbReference type="CDD" id="cd00833">
    <property type="entry name" value="PKS"/>
    <property type="match status" value="1"/>
</dbReference>
<dbReference type="FunFam" id="3.40.366.10:FF:000017">
    <property type="entry name" value="Non-reducing polyketide synthase aptA"/>
    <property type="match status" value="1"/>
</dbReference>
<dbReference type="FunFam" id="1.10.1200.10:FF:000011">
    <property type="entry name" value="Sterigmatocystin biosynthesis polyketide synthase"/>
    <property type="match status" value="1"/>
</dbReference>
<dbReference type="FunFam" id="3.10.129.110:FF:000001">
    <property type="entry name" value="Sterigmatocystin biosynthesis polyketide synthase"/>
    <property type="match status" value="1"/>
</dbReference>
<dbReference type="FunFam" id="3.40.47.10:FF:000031">
    <property type="entry name" value="Sterigmatocystin biosynthesis polyketide synthase"/>
    <property type="match status" value="1"/>
</dbReference>
<dbReference type="Gene3D" id="3.30.70.3290">
    <property type="match status" value="2"/>
</dbReference>
<dbReference type="Gene3D" id="3.40.47.10">
    <property type="match status" value="1"/>
</dbReference>
<dbReference type="Gene3D" id="1.10.1200.10">
    <property type="entry name" value="ACP-like"/>
    <property type="match status" value="1"/>
</dbReference>
<dbReference type="Gene3D" id="3.40.366.10">
    <property type="entry name" value="Malonyl-Coenzyme A Acyl Carrier Protein, domain 2"/>
    <property type="match status" value="3"/>
</dbReference>
<dbReference type="Gene3D" id="3.10.129.110">
    <property type="entry name" value="Polyketide synthase dehydratase"/>
    <property type="match status" value="1"/>
</dbReference>
<dbReference type="InterPro" id="IPR001227">
    <property type="entry name" value="Ac_transferase_dom_sf"/>
</dbReference>
<dbReference type="InterPro" id="IPR036736">
    <property type="entry name" value="ACP-like_sf"/>
</dbReference>
<dbReference type="InterPro" id="IPR014043">
    <property type="entry name" value="Acyl_transferase_dom"/>
</dbReference>
<dbReference type="InterPro" id="IPR016035">
    <property type="entry name" value="Acyl_Trfase/lysoPLipase"/>
</dbReference>
<dbReference type="InterPro" id="IPR018201">
    <property type="entry name" value="Ketoacyl_synth_AS"/>
</dbReference>
<dbReference type="InterPro" id="IPR014031">
    <property type="entry name" value="Ketoacyl_synth_C"/>
</dbReference>
<dbReference type="InterPro" id="IPR014030">
    <property type="entry name" value="Ketoacyl_synth_N"/>
</dbReference>
<dbReference type="InterPro" id="IPR020841">
    <property type="entry name" value="PKS_Beta-ketoAc_synthase_dom"/>
</dbReference>
<dbReference type="InterPro" id="IPR042104">
    <property type="entry name" value="PKS_dehydratase_sf"/>
</dbReference>
<dbReference type="InterPro" id="IPR049900">
    <property type="entry name" value="PKS_mFAS_DH"/>
</dbReference>
<dbReference type="InterPro" id="IPR050091">
    <property type="entry name" value="PKS_NRPS_Biosynth_Enz"/>
</dbReference>
<dbReference type="InterPro" id="IPR020806">
    <property type="entry name" value="PKS_PP-bd"/>
</dbReference>
<dbReference type="InterPro" id="IPR009081">
    <property type="entry name" value="PP-bd_ACP"/>
</dbReference>
<dbReference type="InterPro" id="IPR030918">
    <property type="entry name" value="PT_fungal_PKS"/>
</dbReference>
<dbReference type="InterPro" id="IPR032088">
    <property type="entry name" value="SAT"/>
</dbReference>
<dbReference type="InterPro" id="IPR016039">
    <property type="entry name" value="Thiolase-like"/>
</dbReference>
<dbReference type="NCBIfam" id="TIGR04532">
    <property type="entry name" value="PT_fungal_PKS"/>
    <property type="match status" value="1"/>
</dbReference>
<dbReference type="PANTHER" id="PTHR43775">
    <property type="entry name" value="FATTY ACID SYNTHASE"/>
    <property type="match status" value="1"/>
</dbReference>
<dbReference type="PANTHER" id="PTHR43775:SF24">
    <property type="entry name" value="NON-REDUCING POLYKETIDE SYNTHASE APTA-RELATED"/>
    <property type="match status" value="1"/>
</dbReference>
<dbReference type="Pfam" id="PF00698">
    <property type="entry name" value="Acyl_transf_1"/>
    <property type="match status" value="1"/>
</dbReference>
<dbReference type="Pfam" id="PF22621">
    <property type="entry name" value="CurL-like_PKS_C"/>
    <property type="match status" value="1"/>
</dbReference>
<dbReference type="Pfam" id="PF00109">
    <property type="entry name" value="ketoacyl-synt"/>
    <property type="match status" value="1"/>
</dbReference>
<dbReference type="Pfam" id="PF02801">
    <property type="entry name" value="Ketoacyl-synt_C"/>
    <property type="match status" value="1"/>
</dbReference>
<dbReference type="Pfam" id="PF00550">
    <property type="entry name" value="PP-binding"/>
    <property type="match status" value="1"/>
</dbReference>
<dbReference type="Pfam" id="PF16073">
    <property type="entry name" value="SAT"/>
    <property type="match status" value="1"/>
</dbReference>
<dbReference type="SMART" id="SM00827">
    <property type="entry name" value="PKS_AT"/>
    <property type="match status" value="1"/>
</dbReference>
<dbReference type="SMART" id="SM00825">
    <property type="entry name" value="PKS_KS"/>
    <property type="match status" value="1"/>
</dbReference>
<dbReference type="SMART" id="SM00823">
    <property type="entry name" value="PKS_PP"/>
    <property type="match status" value="1"/>
</dbReference>
<dbReference type="SUPFAM" id="SSF47336">
    <property type="entry name" value="ACP-like"/>
    <property type="match status" value="1"/>
</dbReference>
<dbReference type="SUPFAM" id="SSF52151">
    <property type="entry name" value="FabD/lysophospholipase-like"/>
    <property type="match status" value="1"/>
</dbReference>
<dbReference type="SUPFAM" id="SSF53901">
    <property type="entry name" value="Thiolase-like"/>
    <property type="match status" value="1"/>
</dbReference>
<dbReference type="PROSITE" id="PS50075">
    <property type="entry name" value="CARRIER"/>
    <property type="match status" value="1"/>
</dbReference>
<dbReference type="PROSITE" id="PS00606">
    <property type="entry name" value="KS3_1"/>
    <property type="match status" value="1"/>
</dbReference>
<dbReference type="PROSITE" id="PS52004">
    <property type="entry name" value="KS3_2"/>
    <property type="match status" value="1"/>
</dbReference>
<dbReference type="PROSITE" id="PS52019">
    <property type="entry name" value="PKS_MFAS_DH"/>
    <property type="match status" value="1"/>
</dbReference>
<accession>F2PWS5</accession>
<comment type="function">
    <text evidence="2 3 11">Non-reducing polyketide synthase; part of the gene cluster that mediates the biosynthesis of neosartoricin B, a prenylated anthracenone that probably exhibits T-cell antiproliferative activity, suggestive of a physiological role as an immunosuppressive agent (PubMed:23758576). The non-reducing polyketide synthase nscA probably synthesizes and cyclizes the decaketide backbone (By similarity). The hydrolase nscB then mediates the product release through hydrolysis followed by spontaneous decarboxylation (By similarity). The prenyltransferase nscD catalyzes the addition of the dimethylallyl group to the aromatic C5 (By similarity). The FAD-dependent monooxygenase nscC is then responsible for the stereospecific hydroxylation at C2 (By similarity). Neosartoricin B can be converted into two additional compounds neosartoricins C and D (By similarity). Neosartoricin C is a spirocyclic compound that is cyclized through the attack of C3 hydroxyl on C14, followed by dehydration (By similarity). On the other hand, neosartoricin D is a further cyclized compound in which attack of C2 on C14 in neosartoricin C results in the formation of the acetal-containing dioxabicyclo-octanone ring (By similarity). Both of these compounds are novel and possibly represent related metabolites of the gene cluster (By similarity).</text>
</comment>
<comment type="cofactor">
    <cofactor evidence="1">
        <name>pantetheine 4'-phosphate</name>
        <dbReference type="ChEBI" id="CHEBI:47942"/>
    </cofactor>
    <text evidence="5">Binds 1 phosphopantetheine covalently.</text>
</comment>
<comment type="pathway">
    <text evidence="11">Secondary metabolite biosynthesis.</text>
</comment>
<comment type="domain">
    <text evidence="4">Multidomain protein; including a starter unit:ACP transacylase (SAT) that selects the starter unit; a ketosynthase (KS) that catalyzes repeated decarboxylative condensation to elongate the polyketide backbone; a malonyl-CoA:ACP transacylase (MAT) that selects and transfers the extender unit malonyl-CoA; a product template (PT) domain that controls the immediate cyclization regioselectivity of the reactive polyketide backbone; and an acyl-carrier protein (ACP) that serves as the tether of the growing and completed polyketide via its phosphopantetheinyl arm (By similarity).</text>
</comment>
<protein>
    <recommendedName>
        <fullName evidence="10">Non-reducing polyketide synthase nscA</fullName>
        <ecNumber evidence="11">2.3.1.-</ecNumber>
    </recommendedName>
    <alternativeName>
        <fullName evidence="10">Conidial yellow pigment biosynthesis polyketide synthase nscA</fullName>
    </alternativeName>
    <alternativeName>
        <fullName evidence="10">Neosartoricin B biosynthesis protein A</fullName>
    </alternativeName>
</protein>
<organism>
    <name type="scientific">Trichophyton equinum (strain ATCC MYA-4606 / CBS 127.97)</name>
    <name type="common">Horse ringworm fungus</name>
    <dbReference type="NCBI Taxonomy" id="559882"/>
    <lineage>
        <taxon>Eukaryota</taxon>
        <taxon>Fungi</taxon>
        <taxon>Dikarya</taxon>
        <taxon>Ascomycota</taxon>
        <taxon>Pezizomycotina</taxon>
        <taxon>Eurotiomycetes</taxon>
        <taxon>Eurotiomycetidae</taxon>
        <taxon>Onygenales</taxon>
        <taxon>Arthrodermataceae</taxon>
        <taxon>Trichophyton</taxon>
    </lineage>
</organism>
<proteinExistence type="inferred from homology"/>
<name>NSCA_TRIEC</name>
<feature type="chain" id="PRO_0000437891" description="Non-reducing polyketide synthase nscA">
    <location>
        <begin position="1"/>
        <end position="1777"/>
    </location>
</feature>
<feature type="domain" description="Ketosynthase family 3 (KS3)" evidence="7">
    <location>
        <begin position="396"/>
        <end position="829"/>
    </location>
</feature>
<feature type="domain" description="PKS/mFAS DH" evidence="8">
    <location>
        <begin position="1301"/>
        <end position="1611"/>
    </location>
</feature>
<feature type="domain" description="Carrier" evidence="6">
    <location>
        <begin position="1700"/>
        <end position="1777"/>
    </location>
</feature>
<feature type="region of interest" description="N-terminal acylcarrier protein transacylase domain (SAT)" evidence="5">
    <location>
        <begin position="27"/>
        <end position="261"/>
    </location>
</feature>
<feature type="region of interest" description="Malonyl-CoA:ACP transacylase (MAT) domain" evidence="5">
    <location>
        <begin position="934"/>
        <end position="1212"/>
    </location>
</feature>
<feature type="region of interest" description="Product template (PT) domain" evidence="5">
    <location>
        <begin position="1297"/>
        <end position="1616"/>
    </location>
</feature>
<feature type="region of interest" description="N-terminal hotdog fold" evidence="8">
    <location>
        <begin position="1301"/>
        <end position="1437"/>
    </location>
</feature>
<feature type="region of interest" description="C-terminal hotdog fold" evidence="8">
    <location>
        <begin position="1465"/>
        <end position="1611"/>
    </location>
</feature>
<feature type="region of interest" description="Disordered" evidence="9">
    <location>
        <begin position="1674"/>
        <end position="1704"/>
    </location>
</feature>
<feature type="compositionally biased region" description="Low complexity" evidence="9">
    <location>
        <begin position="1677"/>
        <end position="1688"/>
    </location>
</feature>
<feature type="active site" description="For beta-ketoacyl synthase activity" evidence="7">
    <location>
        <position position="569"/>
    </location>
</feature>
<feature type="active site" description="For beta-ketoacyl synthase activity" evidence="7">
    <location>
        <position position="704"/>
    </location>
</feature>
<feature type="active site" description="For beta-ketoacyl synthase activity" evidence="7">
    <location>
        <position position="747"/>
    </location>
</feature>
<feature type="active site" description="Proton acceptor; for dehydratase activity" evidence="8">
    <location>
        <position position="1333"/>
    </location>
</feature>
<feature type="active site" description="Proton donor; for dehydratase activity" evidence="8">
    <location>
        <position position="1522"/>
    </location>
</feature>
<feature type="modified residue" description="O-(pantetheine 4'-phosphoryl)serine" evidence="6">
    <location>
        <position position="1737"/>
    </location>
</feature>
<evidence type="ECO:0000250" key="1">
    <source>
        <dbReference type="UniProtKB" id="A0A0K0MCJ4"/>
    </source>
</evidence>
<evidence type="ECO:0000250" key="2">
    <source>
        <dbReference type="UniProtKB" id="A1D8I9"/>
    </source>
</evidence>
<evidence type="ECO:0000250" key="3">
    <source>
        <dbReference type="UniProtKB" id="F2S6Z9"/>
    </source>
</evidence>
<evidence type="ECO:0000250" key="4">
    <source>
        <dbReference type="UniProtKB" id="Q5B0D0"/>
    </source>
</evidence>
<evidence type="ECO:0000255" key="5"/>
<evidence type="ECO:0000255" key="6">
    <source>
        <dbReference type="PROSITE-ProRule" id="PRU00258"/>
    </source>
</evidence>
<evidence type="ECO:0000255" key="7">
    <source>
        <dbReference type="PROSITE-ProRule" id="PRU01348"/>
    </source>
</evidence>
<evidence type="ECO:0000255" key="8">
    <source>
        <dbReference type="PROSITE-ProRule" id="PRU01363"/>
    </source>
</evidence>
<evidence type="ECO:0000256" key="9">
    <source>
        <dbReference type="SAM" id="MobiDB-lite"/>
    </source>
</evidence>
<evidence type="ECO:0000303" key="10">
    <source>
    </source>
</evidence>
<evidence type="ECO:0000305" key="11">
    <source>
    </source>
</evidence>
<gene>
    <name evidence="11" type="primary">nscA</name>
    <name type="ORF">TEQG_05346</name>
</gene>